<geneLocation type="chloroplast"/>
<reference key="1">
    <citation type="submission" date="2005-09" db="EMBL/GenBank/DDBJ databases">
        <title>The chloroplast genome of mulberry: structural features and comparative analysis.</title>
        <authorList>
            <person name="Ravi V."/>
            <person name="Khurana J.P."/>
            <person name="Tyagi A.K."/>
            <person name="Khurana P."/>
        </authorList>
    </citation>
    <scope>NUCLEOTIDE SEQUENCE [LARGE SCALE GENOMIC DNA]</scope>
    <source>
        <strain>cv. K2</strain>
    </source>
</reference>
<protein>
    <recommendedName>
        <fullName evidence="1">Cytochrome c biogenesis protein CcsA</fullName>
    </recommendedName>
</protein>
<sequence length="321" mass="36906">MIFSTLEHILTHISFSVVSIVITIHLITLLVDEIIGLYDSLEKGMMTTFFCITGLLMTRWIYLRYLPLSNLYESLIFLSWSFSIIHMVPYFKKYKNYLKAITAPSAIFTQGFATSGLLTEMHQSEILVPALQSHWLMMHVSMMVLGYAALLCGSLLSLALLVITFRKFISIFSKSNNFVNESFSLGEIQYVREKNNLLPNTSFLSSRNYYRFQLIQQLDLWSYRIISLGFIFLTIGILSGAVWANEAWGSYWNWDPKETWAFITWTLFSIYLHTRTNKNFESVNSAIVASMGFLIIWICYFGVNLLGIGLHSYGSFTLTSN</sequence>
<name>CCSA_MORIN</name>
<feature type="chain" id="PRO_0000353769" description="Cytochrome c biogenesis protein CcsA">
    <location>
        <begin position="1"/>
        <end position="321"/>
    </location>
</feature>
<feature type="transmembrane region" description="Helical" evidence="1">
    <location>
        <begin position="17"/>
        <end position="37"/>
    </location>
</feature>
<feature type="transmembrane region" description="Helical" evidence="1">
    <location>
        <begin position="46"/>
        <end position="63"/>
    </location>
</feature>
<feature type="transmembrane region" description="Helical" evidence="1">
    <location>
        <begin position="71"/>
        <end position="91"/>
    </location>
</feature>
<feature type="transmembrane region" description="Helical" evidence="1">
    <location>
        <begin position="98"/>
        <end position="118"/>
    </location>
</feature>
<feature type="transmembrane region" description="Helical" evidence="1">
    <location>
        <begin position="143"/>
        <end position="163"/>
    </location>
</feature>
<feature type="transmembrane region" description="Helical" evidence="1">
    <location>
        <begin position="225"/>
        <end position="245"/>
    </location>
</feature>
<feature type="transmembrane region" description="Helical" evidence="1">
    <location>
        <begin position="259"/>
        <end position="273"/>
    </location>
</feature>
<feature type="transmembrane region" description="Helical" evidence="1">
    <location>
        <begin position="286"/>
        <end position="306"/>
    </location>
</feature>
<comment type="function">
    <text evidence="1">Required during biogenesis of c-type cytochromes (cytochrome c6 and cytochrome f) at the step of heme attachment.</text>
</comment>
<comment type="subunit">
    <text evidence="1">May interact with Ccs1.</text>
</comment>
<comment type="subcellular location">
    <subcellularLocation>
        <location evidence="1">Plastid</location>
        <location evidence="1">Chloroplast thylakoid membrane</location>
        <topology evidence="1">Multi-pass membrane protein</topology>
    </subcellularLocation>
</comment>
<comment type="similarity">
    <text evidence="1">Belongs to the CcmF/CycK/Ccl1/NrfE/CcsA family.</text>
</comment>
<dbReference type="EMBL" id="DQ226511">
    <property type="protein sequence ID" value="ABB21005.1"/>
    <property type="molecule type" value="Genomic_DNA"/>
</dbReference>
<dbReference type="RefSeq" id="YP_762309.1">
    <property type="nucleotide sequence ID" value="NC_008359.1"/>
</dbReference>
<dbReference type="SMR" id="Q09WW9"/>
<dbReference type="GeneID" id="4290606"/>
<dbReference type="GO" id="GO:0009535">
    <property type="term" value="C:chloroplast thylakoid membrane"/>
    <property type="evidence" value="ECO:0007669"/>
    <property type="project" value="UniProtKB-SubCell"/>
</dbReference>
<dbReference type="GO" id="GO:0005886">
    <property type="term" value="C:plasma membrane"/>
    <property type="evidence" value="ECO:0007669"/>
    <property type="project" value="TreeGrafter"/>
</dbReference>
<dbReference type="GO" id="GO:0020037">
    <property type="term" value="F:heme binding"/>
    <property type="evidence" value="ECO:0007669"/>
    <property type="project" value="InterPro"/>
</dbReference>
<dbReference type="GO" id="GO:0017004">
    <property type="term" value="P:cytochrome complex assembly"/>
    <property type="evidence" value="ECO:0007669"/>
    <property type="project" value="UniProtKB-UniRule"/>
</dbReference>
<dbReference type="HAMAP" id="MF_01391">
    <property type="entry name" value="CytC_CcsA"/>
    <property type="match status" value="1"/>
</dbReference>
<dbReference type="InterPro" id="IPR002541">
    <property type="entry name" value="Cyt_c_assembly"/>
</dbReference>
<dbReference type="InterPro" id="IPR017562">
    <property type="entry name" value="Cyt_c_biogenesis_CcsA"/>
</dbReference>
<dbReference type="InterPro" id="IPR045062">
    <property type="entry name" value="Cyt_c_biogenesis_CcsA/CcmC"/>
</dbReference>
<dbReference type="NCBIfam" id="TIGR03144">
    <property type="entry name" value="cytochr_II_ccsB"/>
    <property type="match status" value="1"/>
</dbReference>
<dbReference type="PANTHER" id="PTHR30071:SF1">
    <property type="entry name" value="CYTOCHROME B_B6 PROTEIN-RELATED"/>
    <property type="match status" value="1"/>
</dbReference>
<dbReference type="PANTHER" id="PTHR30071">
    <property type="entry name" value="HEME EXPORTER PROTEIN C"/>
    <property type="match status" value="1"/>
</dbReference>
<dbReference type="Pfam" id="PF01578">
    <property type="entry name" value="Cytochrom_C_asm"/>
    <property type="match status" value="1"/>
</dbReference>
<keyword id="KW-0150">Chloroplast</keyword>
<keyword id="KW-0201">Cytochrome c-type biogenesis</keyword>
<keyword id="KW-0472">Membrane</keyword>
<keyword id="KW-0934">Plastid</keyword>
<keyword id="KW-0793">Thylakoid</keyword>
<keyword id="KW-0812">Transmembrane</keyword>
<keyword id="KW-1133">Transmembrane helix</keyword>
<proteinExistence type="inferred from homology"/>
<evidence type="ECO:0000255" key="1">
    <source>
        <dbReference type="HAMAP-Rule" id="MF_01391"/>
    </source>
</evidence>
<organism>
    <name type="scientific">Morus indica</name>
    <name type="common">Mulberry</name>
    <dbReference type="NCBI Taxonomy" id="248361"/>
    <lineage>
        <taxon>Eukaryota</taxon>
        <taxon>Viridiplantae</taxon>
        <taxon>Streptophyta</taxon>
        <taxon>Embryophyta</taxon>
        <taxon>Tracheophyta</taxon>
        <taxon>Spermatophyta</taxon>
        <taxon>Magnoliopsida</taxon>
        <taxon>eudicotyledons</taxon>
        <taxon>Gunneridae</taxon>
        <taxon>Pentapetalae</taxon>
        <taxon>rosids</taxon>
        <taxon>fabids</taxon>
        <taxon>Rosales</taxon>
        <taxon>Moraceae</taxon>
        <taxon>Moreae</taxon>
        <taxon>Morus</taxon>
    </lineage>
</organism>
<accession>Q09WW9</accession>
<gene>
    <name evidence="1" type="primary">ccsA</name>
    <name type="ordered locus">MoinCp070</name>
</gene>